<accession>A1WVB6</accession>
<protein>
    <recommendedName>
        <fullName evidence="1">Small ribosomal subunit protein uS3</fullName>
    </recommendedName>
    <alternativeName>
        <fullName evidence="2">30S ribosomal protein S3</fullName>
    </alternativeName>
</protein>
<keyword id="KW-1185">Reference proteome</keyword>
<keyword id="KW-0687">Ribonucleoprotein</keyword>
<keyword id="KW-0689">Ribosomal protein</keyword>
<keyword id="KW-0694">RNA-binding</keyword>
<keyword id="KW-0699">rRNA-binding</keyword>
<comment type="function">
    <text evidence="1">Binds the lower part of the 30S subunit head. Binds mRNA in the 70S ribosome, positioning it for translation.</text>
</comment>
<comment type="subunit">
    <text evidence="1">Part of the 30S ribosomal subunit. Forms a tight complex with proteins S10 and S14.</text>
</comment>
<comment type="similarity">
    <text evidence="1">Belongs to the universal ribosomal protein uS3 family.</text>
</comment>
<organism>
    <name type="scientific">Halorhodospira halophila (strain DSM 244 / SL1)</name>
    <name type="common">Ectothiorhodospira halophila (strain DSM 244 / SL1)</name>
    <dbReference type="NCBI Taxonomy" id="349124"/>
    <lineage>
        <taxon>Bacteria</taxon>
        <taxon>Pseudomonadati</taxon>
        <taxon>Pseudomonadota</taxon>
        <taxon>Gammaproteobacteria</taxon>
        <taxon>Chromatiales</taxon>
        <taxon>Ectothiorhodospiraceae</taxon>
        <taxon>Halorhodospira</taxon>
    </lineage>
</organism>
<gene>
    <name evidence="1" type="primary">rpsC</name>
    <name type="ordered locus">Hhal_0852</name>
</gene>
<sequence>MGNKTHPTGFRLGVTEDWRSMWYADSSNFGKYLNTDLEVREFIRERLKNASVSRIQIERPAKNALVTIHTARPGIVIGKKGEDIDRLRGEVAARMGVPVHINIEEIRKPEADSKLVAESIAGQLERRVMFRRALKRAVGNAQRVGAQGIKVQVSGRLNGSEIARTEWYREGRVPLHTLRADIDYGFAEAKTTYGVIGVKVWIFKGEIIDTENEGAPAERVKRAAAAQG</sequence>
<feature type="chain" id="PRO_0000293801" description="Small ribosomal subunit protein uS3">
    <location>
        <begin position="1"/>
        <end position="228"/>
    </location>
</feature>
<feature type="domain" description="KH type-2" evidence="1">
    <location>
        <begin position="39"/>
        <end position="107"/>
    </location>
</feature>
<evidence type="ECO:0000255" key="1">
    <source>
        <dbReference type="HAMAP-Rule" id="MF_01309"/>
    </source>
</evidence>
<evidence type="ECO:0000305" key="2"/>
<reference key="1">
    <citation type="submission" date="2006-12" db="EMBL/GenBank/DDBJ databases">
        <title>Complete sequence of Halorhodospira halophila SL1.</title>
        <authorList>
            <consortium name="US DOE Joint Genome Institute"/>
            <person name="Copeland A."/>
            <person name="Lucas S."/>
            <person name="Lapidus A."/>
            <person name="Barry K."/>
            <person name="Detter J.C."/>
            <person name="Glavina del Rio T."/>
            <person name="Hammon N."/>
            <person name="Israni S."/>
            <person name="Dalin E."/>
            <person name="Tice H."/>
            <person name="Pitluck S."/>
            <person name="Saunders E."/>
            <person name="Brettin T."/>
            <person name="Bruce D."/>
            <person name="Han C."/>
            <person name="Tapia R."/>
            <person name="Schmutz J."/>
            <person name="Larimer F."/>
            <person name="Land M."/>
            <person name="Hauser L."/>
            <person name="Kyrpides N."/>
            <person name="Mikhailova N."/>
            <person name="Hoff W."/>
            <person name="Richardson P."/>
        </authorList>
    </citation>
    <scope>NUCLEOTIDE SEQUENCE [LARGE SCALE GENOMIC DNA]</scope>
    <source>
        <strain>DSM 244 / SL1</strain>
    </source>
</reference>
<dbReference type="EMBL" id="CP000544">
    <property type="protein sequence ID" value="ABM61628.1"/>
    <property type="molecule type" value="Genomic_DNA"/>
</dbReference>
<dbReference type="RefSeq" id="WP_011813651.1">
    <property type="nucleotide sequence ID" value="NC_008789.1"/>
</dbReference>
<dbReference type="SMR" id="A1WVB6"/>
<dbReference type="STRING" id="349124.Hhal_0852"/>
<dbReference type="KEGG" id="hha:Hhal_0852"/>
<dbReference type="eggNOG" id="COG0092">
    <property type="taxonomic scope" value="Bacteria"/>
</dbReference>
<dbReference type="HOGENOM" id="CLU_058591_0_2_6"/>
<dbReference type="OrthoDB" id="9806396at2"/>
<dbReference type="Proteomes" id="UP000000647">
    <property type="component" value="Chromosome"/>
</dbReference>
<dbReference type="GO" id="GO:0022627">
    <property type="term" value="C:cytosolic small ribosomal subunit"/>
    <property type="evidence" value="ECO:0007669"/>
    <property type="project" value="TreeGrafter"/>
</dbReference>
<dbReference type="GO" id="GO:0003729">
    <property type="term" value="F:mRNA binding"/>
    <property type="evidence" value="ECO:0007669"/>
    <property type="project" value="UniProtKB-UniRule"/>
</dbReference>
<dbReference type="GO" id="GO:0019843">
    <property type="term" value="F:rRNA binding"/>
    <property type="evidence" value="ECO:0007669"/>
    <property type="project" value="UniProtKB-UniRule"/>
</dbReference>
<dbReference type="GO" id="GO:0003735">
    <property type="term" value="F:structural constituent of ribosome"/>
    <property type="evidence" value="ECO:0007669"/>
    <property type="project" value="InterPro"/>
</dbReference>
<dbReference type="GO" id="GO:0006412">
    <property type="term" value="P:translation"/>
    <property type="evidence" value="ECO:0007669"/>
    <property type="project" value="UniProtKB-UniRule"/>
</dbReference>
<dbReference type="CDD" id="cd02412">
    <property type="entry name" value="KH-II_30S_S3"/>
    <property type="match status" value="1"/>
</dbReference>
<dbReference type="FunFam" id="3.30.1140.32:FF:000001">
    <property type="entry name" value="30S ribosomal protein S3"/>
    <property type="match status" value="1"/>
</dbReference>
<dbReference type="FunFam" id="3.30.300.20:FF:000001">
    <property type="entry name" value="30S ribosomal protein S3"/>
    <property type="match status" value="1"/>
</dbReference>
<dbReference type="Gene3D" id="3.30.300.20">
    <property type="match status" value="1"/>
</dbReference>
<dbReference type="Gene3D" id="3.30.1140.32">
    <property type="entry name" value="Ribosomal protein S3, C-terminal domain"/>
    <property type="match status" value="1"/>
</dbReference>
<dbReference type="HAMAP" id="MF_01309_B">
    <property type="entry name" value="Ribosomal_uS3_B"/>
    <property type="match status" value="1"/>
</dbReference>
<dbReference type="InterPro" id="IPR004087">
    <property type="entry name" value="KH_dom"/>
</dbReference>
<dbReference type="InterPro" id="IPR015946">
    <property type="entry name" value="KH_dom-like_a/b"/>
</dbReference>
<dbReference type="InterPro" id="IPR004044">
    <property type="entry name" value="KH_dom_type_2"/>
</dbReference>
<dbReference type="InterPro" id="IPR009019">
    <property type="entry name" value="KH_sf_prok-type"/>
</dbReference>
<dbReference type="InterPro" id="IPR036419">
    <property type="entry name" value="Ribosomal_S3_C_sf"/>
</dbReference>
<dbReference type="InterPro" id="IPR005704">
    <property type="entry name" value="Ribosomal_uS3_bac-typ"/>
</dbReference>
<dbReference type="InterPro" id="IPR001351">
    <property type="entry name" value="Ribosomal_uS3_C"/>
</dbReference>
<dbReference type="InterPro" id="IPR018280">
    <property type="entry name" value="Ribosomal_uS3_CS"/>
</dbReference>
<dbReference type="NCBIfam" id="TIGR01009">
    <property type="entry name" value="rpsC_bact"/>
    <property type="match status" value="1"/>
</dbReference>
<dbReference type="PANTHER" id="PTHR11760">
    <property type="entry name" value="30S/40S RIBOSOMAL PROTEIN S3"/>
    <property type="match status" value="1"/>
</dbReference>
<dbReference type="PANTHER" id="PTHR11760:SF19">
    <property type="entry name" value="SMALL RIBOSOMAL SUBUNIT PROTEIN US3C"/>
    <property type="match status" value="1"/>
</dbReference>
<dbReference type="Pfam" id="PF07650">
    <property type="entry name" value="KH_2"/>
    <property type="match status" value="1"/>
</dbReference>
<dbReference type="Pfam" id="PF00189">
    <property type="entry name" value="Ribosomal_S3_C"/>
    <property type="match status" value="1"/>
</dbReference>
<dbReference type="SMART" id="SM00322">
    <property type="entry name" value="KH"/>
    <property type="match status" value="1"/>
</dbReference>
<dbReference type="SUPFAM" id="SSF54814">
    <property type="entry name" value="Prokaryotic type KH domain (KH-domain type II)"/>
    <property type="match status" value="1"/>
</dbReference>
<dbReference type="SUPFAM" id="SSF54821">
    <property type="entry name" value="Ribosomal protein S3 C-terminal domain"/>
    <property type="match status" value="1"/>
</dbReference>
<dbReference type="PROSITE" id="PS50823">
    <property type="entry name" value="KH_TYPE_2"/>
    <property type="match status" value="1"/>
</dbReference>
<dbReference type="PROSITE" id="PS00548">
    <property type="entry name" value="RIBOSOMAL_S3"/>
    <property type="match status" value="1"/>
</dbReference>
<name>RS3_HALHL</name>
<proteinExistence type="inferred from homology"/>